<feature type="chain" id="PRO_0000046342" description="Probable cation-transporting ATPase F">
    <location>
        <begin position="1"/>
        <end position="905"/>
    </location>
</feature>
<feature type="transmembrane region" description="Helical" evidence="2">
    <location>
        <begin position="84"/>
        <end position="104"/>
    </location>
</feature>
<feature type="transmembrane region" description="Helical" evidence="2">
    <location>
        <begin position="248"/>
        <end position="268"/>
    </location>
</feature>
<feature type="transmembrane region" description="Helical" evidence="2">
    <location>
        <begin position="283"/>
        <end position="303"/>
    </location>
</feature>
<feature type="transmembrane region" description="Helical" evidence="2">
    <location>
        <begin position="716"/>
        <end position="736"/>
    </location>
</feature>
<feature type="transmembrane region" description="Helical" evidence="2">
    <location>
        <begin position="738"/>
        <end position="758"/>
    </location>
</feature>
<feature type="transmembrane region" description="Helical" evidence="2">
    <location>
        <begin position="778"/>
        <end position="798"/>
    </location>
</feature>
<feature type="transmembrane region" description="Helical" evidence="2">
    <location>
        <begin position="808"/>
        <end position="828"/>
    </location>
</feature>
<feature type="transmembrane region" description="Helical" evidence="2">
    <location>
        <begin position="842"/>
        <end position="862"/>
    </location>
</feature>
<feature type="transmembrane region" description="Helical" evidence="2">
    <location>
        <begin position="872"/>
        <end position="892"/>
    </location>
</feature>
<feature type="active site" description="4-aspartylphosphate intermediate" evidence="1">
    <location>
        <position position="333"/>
    </location>
</feature>
<feature type="binding site" evidence="1">
    <location>
        <position position="643"/>
    </location>
    <ligand>
        <name>Mg(2+)</name>
        <dbReference type="ChEBI" id="CHEBI:18420"/>
    </ligand>
</feature>
<feature type="binding site" evidence="1">
    <location>
        <position position="647"/>
    </location>
    <ligand>
        <name>Mg(2+)</name>
        <dbReference type="ChEBI" id="CHEBI:18420"/>
    </ligand>
</feature>
<reference key="1">
    <citation type="journal article" date="2003" name="Proc. Natl. Acad. Sci. U.S.A.">
        <title>The complete genome sequence of Mycobacterium bovis.</title>
        <authorList>
            <person name="Garnier T."/>
            <person name="Eiglmeier K."/>
            <person name="Camus J.-C."/>
            <person name="Medina N."/>
            <person name="Mansoor H."/>
            <person name="Pryor M."/>
            <person name="Duthoy S."/>
            <person name="Grondin S."/>
            <person name="Lacroix C."/>
            <person name="Monsempe C."/>
            <person name="Simon S."/>
            <person name="Harris B."/>
            <person name="Atkin R."/>
            <person name="Doggett J."/>
            <person name="Mayes R."/>
            <person name="Keating L."/>
            <person name="Wheeler P.R."/>
            <person name="Parkhill J."/>
            <person name="Barrell B.G."/>
            <person name="Cole S.T."/>
            <person name="Gordon S.V."/>
            <person name="Hewinson R.G."/>
        </authorList>
    </citation>
    <scope>NUCLEOTIDE SEQUENCE [LARGE SCALE GENOMIC DNA]</scope>
    <source>
        <strain>ATCC BAA-935 / AF2122/97</strain>
    </source>
</reference>
<reference key="2">
    <citation type="journal article" date="2017" name="Genome Announc.">
        <title>Updated reference genome sequence and annotation of Mycobacterium bovis AF2122/97.</title>
        <authorList>
            <person name="Malone K.M."/>
            <person name="Farrell D."/>
            <person name="Stuber T.P."/>
            <person name="Schubert O.T."/>
            <person name="Aebersold R."/>
            <person name="Robbe-Austerman S."/>
            <person name="Gordon S.V."/>
        </authorList>
    </citation>
    <scope>NUCLEOTIDE SEQUENCE [LARGE SCALE GENOMIC DNA]</scope>
    <scope>GENOME REANNOTATION</scope>
    <source>
        <strain>ATCC BAA-935 / AF2122/97</strain>
    </source>
</reference>
<comment type="catalytic activity">
    <reaction>
        <text>ATP + H2O = ADP + phosphate + H(+)</text>
        <dbReference type="Rhea" id="RHEA:13065"/>
        <dbReference type="ChEBI" id="CHEBI:15377"/>
        <dbReference type="ChEBI" id="CHEBI:15378"/>
        <dbReference type="ChEBI" id="CHEBI:30616"/>
        <dbReference type="ChEBI" id="CHEBI:43474"/>
        <dbReference type="ChEBI" id="CHEBI:456216"/>
    </reaction>
</comment>
<comment type="subcellular location">
    <subcellularLocation>
        <location>Cell membrane</location>
        <topology>Multi-pass membrane protein</topology>
    </subcellularLocation>
</comment>
<comment type="similarity">
    <text evidence="3">Belongs to the cation transport ATPase (P-type) (TC 3.A.3) family. Type IIA subfamily.</text>
</comment>
<evidence type="ECO:0000250" key="1"/>
<evidence type="ECO:0000255" key="2"/>
<evidence type="ECO:0000305" key="3"/>
<dbReference type="EC" id="7.2.2.-"/>
<dbReference type="EMBL" id="LT708304">
    <property type="protein sequence ID" value="SIU00627.1"/>
    <property type="molecule type" value="Genomic_DNA"/>
</dbReference>
<dbReference type="RefSeq" id="NP_855670.1">
    <property type="nucleotide sequence ID" value="NC_002945.3"/>
</dbReference>
<dbReference type="RefSeq" id="WP_003410027.1">
    <property type="nucleotide sequence ID" value="NC_002945.4"/>
</dbReference>
<dbReference type="SMR" id="P63688"/>
<dbReference type="KEGG" id="mbo:BQ2027_MB2020"/>
<dbReference type="PATRIC" id="fig|233413.5.peg.2219"/>
<dbReference type="Proteomes" id="UP000001419">
    <property type="component" value="Chromosome"/>
</dbReference>
<dbReference type="GO" id="GO:0005886">
    <property type="term" value="C:plasma membrane"/>
    <property type="evidence" value="ECO:0007669"/>
    <property type="project" value="UniProtKB-SubCell"/>
</dbReference>
<dbReference type="GO" id="GO:0005524">
    <property type="term" value="F:ATP binding"/>
    <property type="evidence" value="ECO:0007669"/>
    <property type="project" value="UniProtKB-KW"/>
</dbReference>
<dbReference type="GO" id="GO:0016887">
    <property type="term" value="F:ATP hydrolysis activity"/>
    <property type="evidence" value="ECO:0007669"/>
    <property type="project" value="InterPro"/>
</dbReference>
<dbReference type="GO" id="GO:0046872">
    <property type="term" value="F:metal ion binding"/>
    <property type="evidence" value="ECO:0007669"/>
    <property type="project" value="UniProtKB-KW"/>
</dbReference>
<dbReference type="GO" id="GO:0005391">
    <property type="term" value="F:P-type sodium:potassium-exchanging transporter activity"/>
    <property type="evidence" value="ECO:0007669"/>
    <property type="project" value="TreeGrafter"/>
</dbReference>
<dbReference type="GO" id="GO:0030007">
    <property type="term" value="P:intracellular potassium ion homeostasis"/>
    <property type="evidence" value="ECO:0007669"/>
    <property type="project" value="TreeGrafter"/>
</dbReference>
<dbReference type="GO" id="GO:0006883">
    <property type="term" value="P:intracellular sodium ion homeostasis"/>
    <property type="evidence" value="ECO:0007669"/>
    <property type="project" value="TreeGrafter"/>
</dbReference>
<dbReference type="GO" id="GO:1990573">
    <property type="term" value="P:potassium ion import across plasma membrane"/>
    <property type="evidence" value="ECO:0007669"/>
    <property type="project" value="TreeGrafter"/>
</dbReference>
<dbReference type="GO" id="GO:1902600">
    <property type="term" value="P:proton transmembrane transport"/>
    <property type="evidence" value="ECO:0007669"/>
    <property type="project" value="TreeGrafter"/>
</dbReference>
<dbReference type="GO" id="GO:0036376">
    <property type="term" value="P:sodium ion export across plasma membrane"/>
    <property type="evidence" value="ECO:0007669"/>
    <property type="project" value="TreeGrafter"/>
</dbReference>
<dbReference type="CDD" id="cd02080">
    <property type="entry name" value="P-type_ATPase_cation"/>
    <property type="match status" value="1"/>
</dbReference>
<dbReference type="FunFam" id="2.70.150.10:FF:000016">
    <property type="entry name" value="Calcium-transporting P-type ATPase putative"/>
    <property type="match status" value="1"/>
</dbReference>
<dbReference type="FunFam" id="3.40.50.1000:FF:000028">
    <property type="entry name" value="Calcium-transporting P-type ATPase, putative"/>
    <property type="match status" value="1"/>
</dbReference>
<dbReference type="Gene3D" id="3.40.1110.10">
    <property type="entry name" value="Calcium-transporting ATPase, cytoplasmic domain N"/>
    <property type="match status" value="1"/>
</dbReference>
<dbReference type="Gene3D" id="2.70.150.10">
    <property type="entry name" value="Calcium-transporting ATPase, cytoplasmic transduction domain A"/>
    <property type="match status" value="1"/>
</dbReference>
<dbReference type="Gene3D" id="1.20.1110.10">
    <property type="entry name" value="Calcium-transporting ATPase, transmembrane domain"/>
    <property type="match status" value="1"/>
</dbReference>
<dbReference type="Gene3D" id="3.40.50.1000">
    <property type="entry name" value="HAD superfamily/HAD-like"/>
    <property type="match status" value="1"/>
</dbReference>
<dbReference type="InterPro" id="IPR006068">
    <property type="entry name" value="ATPase_P-typ_cation-transptr_C"/>
</dbReference>
<dbReference type="InterPro" id="IPR004014">
    <property type="entry name" value="ATPase_P-typ_cation-transptr_N"/>
</dbReference>
<dbReference type="InterPro" id="IPR023299">
    <property type="entry name" value="ATPase_P-typ_cyto_dom_N"/>
</dbReference>
<dbReference type="InterPro" id="IPR018303">
    <property type="entry name" value="ATPase_P-typ_P_site"/>
</dbReference>
<dbReference type="InterPro" id="IPR023298">
    <property type="entry name" value="ATPase_P-typ_TM_dom_sf"/>
</dbReference>
<dbReference type="InterPro" id="IPR008250">
    <property type="entry name" value="ATPase_P-typ_transduc_dom_A_sf"/>
</dbReference>
<dbReference type="InterPro" id="IPR050510">
    <property type="entry name" value="Cation_transp_ATPase_P-type"/>
</dbReference>
<dbReference type="InterPro" id="IPR036412">
    <property type="entry name" value="HAD-like_sf"/>
</dbReference>
<dbReference type="InterPro" id="IPR023214">
    <property type="entry name" value="HAD_sf"/>
</dbReference>
<dbReference type="InterPro" id="IPR001757">
    <property type="entry name" value="P_typ_ATPase"/>
</dbReference>
<dbReference type="InterPro" id="IPR044492">
    <property type="entry name" value="P_typ_ATPase_HD_dom"/>
</dbReference>
<dbReference type="NCBIfam" id="TIGR01494">
    <property type="entry name" value="ATPase_P-type"/>
    <property type="match status" value="3"/>
</dbReference>
<dbReference type="PANTHER" id="PTHR43294:SF21">
    <property type="entry name" value="CATION TRANSPORTING ATPASE"/>
    <property type="match status" value="1"/>
</dbReference>
<dbReference type="PANTHER" id="PTHR43294">
    <property type="entry name" value="SODIUM/POTASSIUM-TRANSPORTING ATPASE SUBUNIT ALPHA"/>
    <property type="match status" value="1"/>
</dbReference>
<dbReference type="Pfam" id="PF13246">
    <property type="entry name" value="Cation_ATPase"/>
    <property type="match status" value="1"/>
</dbReference>
<dbReference type="Pfam" id="PF00689">
    <property type="entry name" value="Cation_ATPase_C"/>
    <property type="match status" value="1"/>
</dbReference>
<dbReference type="Pfam" id="PF00690">
    <property type="entry name" value="Cation_ATPase_N"/>
    <property type="match status" value="1"/>
</dbReference>
<dbReference type="Pfam" id="PF00122">
    <property type="entry name" value="E1-E2_ATPase"/>
    <property type="match status" value="1"/>
</dbReference>
<dbReference type="Pfam" id="PF08282">
    <property type="entry name" value="Hydrolase_3"/>
    <property type="match status" value="1"/>
</dbReference>
<dbReference type="PRINTS" id="PR00119">
    <property type="entry name" value="CATATPASE"/>
</dbReference>
<dbReference type="PRINTS" id="PR00120">
    <property type="entry name" value="HATPASE"/>
</dbReference>
<dbReference type="SFLD" id="SFLDG00002">
    <property type="entry name" value="C1.7:_P-type_atpase_like"/>
    <property type="match status" value="1"/>
</dbReference>
<dbReference type="SFLD" id="SFLDF00027">
    <property type="entry name" value="p-type_atpase"/>
    <property type="match status" value="1"/>
</dbReference>
<dbReference type="SMART" id="SM00831">
    <property type="entry name" value="Cation_ATPase_N"/>
    <property type="match status" value="1"/>
</dbReference>
<dbReference type="SUPFAM" id="SSF81653">
    <property type="entry name" value="Calcium ATPase, transduction domain A"/>
    <property type="match status" value="1"/>
</dbReference>
<dbReference type="SUPFAM" id="SSF81665">
    <property type="entry name" value="Calcium ATPase, transmembrane domain M"/>
    <property type="match status" value="1"/>
</dbReference>
<dbReference type="SUPFAM" id="SSF56784">
    <property type="entry name" value="HAD-like"/>
    <property type="match status" value="1"/>
</dbReference>
<dbReference type="SUPFAM" id="SSF81660">
    <property type="entry name" value="Metal cation-transporting ATPase, ATP-binding domain N"/>
    <property type="match status" value="1"/>
</dbReference>
<dbReference type="PROSITE" id="PS00154">
    <property type="entry name" value="ATPASE_E1_E2"/>
    <property type="match status" value="1"/>
</dbReference>
<protein>
    <recommendedName>
        <fullName>Probable cation-transporting ATPase F</fullName>
        <ecNumber>7.2.2.-</ecNumber>
    </recommendedName>
</protein>
<gene>
    <name type="primary">ctpF</name>
    <name type="ordered locus">BQ2027_MB2020</name>
</gene>
<name>CTPF_MYCBO</name>
<proteinExistence type="inferred from homology"/>
<sequence>MSASVSATTAHHGLPAHEVVLLLESDPYHGLSDGEAAQRLERFGPNTLAVVTRASLLARILRQFHHPLIYVLLVAGTITAGLKEFVDAAVIFGVVVINAIVGFIQESKAEAALQGLRSMVHTHAKVVREGHEHTMPSEELVPGDLVLLAAGDKVPADLRLVRQTGLSVNESALTGESTPVHKDEVALPEGTPVADRRNIAYSGTLVTAGHGAGIVVATGAETELGEIHRLVGAAEVVATPLTAKLAWFSKFLTIAILGLAALTFGVGLLRRQDAVETFTAAIALAVGAIPEGLPTAVTITLAIGMARMAKRRAVIRRLPAVETLGSTTVICADKTGTLTENQMTVQSIWTPHGEIRATGTGYAPDVLLCDTDDAPVPVNANAALRWSLLAGACSNDAALVRDGTRWQIVGDPTEGAMLVVAAKAGFNPERLATTLPQVAAIPFSSERQYMATLHRDGTDHVVLAKGAVERMLDLCGTEMGADGALRPLDRATVLRATEMLTSRGLRVLATGMGAGAGTPDDFDENVIPGSLALTGLQAMSDPPRAAAASAVAACHSAGIAVKMITGDHAGTATAIATEVGLLDNTEPAAGSVLTGAELAALSADQYPEAVDTASVFARVSPEQKLRLVQALQARGHVVAMTGDGVNDAPALRQANIGVAMGRGGTEVAKDAADMVLTDDDFATIEAAVEEGRGVFDNLTKFITWTLPTNLGEGLVILAAIAVGVALPILPTQILWINMTTAIALGLMLAFEPKEAGIMTRPPRDPDQPLLTGWLVRRTLLVSTLLVASAWWLFAWELDNGAGLHEARTAALNLFVVVEAFYLFSCRSLTRSAWRLGMFANRWIILGVSAQAIAQFAITYLPAMNMVFDTAPIDIGVWVRIFAVATAITIVVATDTLLPRIRAQPP</sequence>
<accession>P63688</accession>
<accession>A0A1R3Y0A8</accession>
<accession>Q10860</accession>
<accession>Q10861</accession>
<accession>X2BJ82</accession>
<organism>
    <name type="scientific">Mycobacterium bovis (strain ATCC BAA-935 / AF2122/97)</name>
    <dbReference type="NCBI Taxonomy" id="233413"/>
    <lineage>
        <taxon>Bacteria</taxon>
        <taxon>Bacillati</taxon>
        <taxon>Actinomycetota</taxon>
        <taxon>Actinomycetes</taxon>
        <taxon>Mycobacteriales</taxon>
        <taxon>Mycobacteriaceae</taxon>
        <taxon>Mycobacterium</taxon>
        <taxon>Mycobacterium tuberculosis complex</taxon>
    </lineage>
</organism>
<keyword id="KW-0067">ATP-binding</keyword>
<keyword id="KW-1003">Cell membrane</keyword>
<keyword id="KW-0460">Magnesium</keyword>
<keyword id="KW-0472">Membrane</keyword>
<keyword id="KW-0479">Metal-binding</keyword>
<keyword id="KW-0547">Nucleotide-binding</keyword>
<keyword id="KW-0597">Phosphoprotein</keyword>
<keyword id="KW-1185">Reference proteome</keyword>
<keyword id="KW-1278">Translocase</keyword>
<keyword id="KW-0812">Transmembrane</keyword>
<keyword id="KW-1133">Transmembrane helix</keyword>